<name>MTNA_OLEA2</name>
<sequence>METHIRYSRQDRTLILLDQRVLPTVEEDFYCNDVADTIYALQTMVVRGAPAIGVTAAYGCCLAAYEAGHPAPHAQWQKELDTLLEKLAQARPTAVNLRWAVERMRSVWKSMGDPDLNTLIARWLDEAEAIHEEDKSINRAIGRHGATLIQDNDCIMTHCNAGALATAGYGTALGVVRGAVDAGRTGITVIANETRPFLQGARLTAYELHKDGIPVTVACDNACGLLMQRGMVQKVVVGADRIAANGDAANKIGTYSVALLAREHGIPFYVAAPLSTIDRATPSGKQIPIEERPAEEVTHVGETRITPEGVPVYNYAFDVTPAHLIAGIVTEQGVLRPPYTASIARAFAAADKDRS</sequence>
<comment type="function">
    <text evidence="1">Catalyzes the interconversion of methylthioribose-1-phosphate (MTR-1-P) into methylthioribulose-1-phosphate (MTRu-1-P).</text>
</comment>
<comment type="catalytic activity">
    <reaction evidence="1">
        <text>5-(methylsulfanyl)-alpha-D-ribose 1-phosphate = 5-(methylsulfanyl)-D-ribulose 1-phosphate</text>
        <dbReference type="Rhea" id="RHEA:19989"/>
        <dbReference type="ChEBI" id="CHEBI:58533"/>
        <dbReference type="ChEBI" id="CHEBI:58548"/>
        <dbReference type="EC" id="5.3.1.23"/>
    </reaction>
</comment>
<comment type="pathway">
    <text evidence="1">Amino-acid biosynthesis; L-methionine biosynthesis via salvage pathway; L-methionine from S-methyl-5-thio-alpha-D-ribose 1-phosphate: step 1/6.</text>
</comment>
<comment type="similarity">
    <text evidence="2">Belongs to the eIF-2B alpha/beta/delta subunits family. MtnA subfamily.</text>
</comment>
<feature type="chain" id="PRO_0000357178" description="Methylthioribose-1-phosphate isomerase">
    <location>
        <begin position="1"/>
        <end position="355"/>
    </location>
</feature>
<feature type="active site" description="Proton donor" evidence="1">
    <location>
        <position position="240"/>
    </location>
</feature>
<feature type="binding site" evidence="1">
    <location>
        <begin position="47"/>
        <end position="49"/>
    </location>
    <ligand>
        <name>substrate</name>
    </ligand>
</feature>
<feature type="binding site" evidence="1">
    <location>
        <position position="91"/>
    </location>
    <ligand>
        <name>substrate</name>
    </ligand>
</feature>
<feature type="binding site" evidence="1">
    <location>
        <position position="199"/>
    </location>
    <ligand>
        <name>substrate</name>
    </ligand>
</feature>
<feature type="binding site" evidence="1">
    <location>
        <begin position="250"/>
        <end position="251"/>
    </location>
    <ligand>
        <name>substrate</name>
    </ligand>
</feature>
<feature type="site" description="Transition state stabilizer" evidence="1">
    <location>
        <position position="159"/>
    </location>
</feature>
<proteinExistence type="inferred from homology"/>
<organism>
    <name type="scientific">Oleidesulfovibrio alaskensis (strain ATCC BAA-1058 / DSM 17464 / G20)</name>
    <name type="common">Desulfovibrio alaskensis</name>
    <dbReference type="NCBI Taxonomy" id="207559"/>
    <lineage>
        <taxon>Bacteria</taxon>
        <taxon>Pseudomonadati</taxon>
        <taxon>Thermodesulfobacteriota</taxon>
        <taxon>Desulfovibrionia</taxon>
        <taxon>Desulfovibrionales</taxon>
        <taxon>Desulfovibrionaceae</taxon>
        <taxon>Oleidesulfovibrio</taxon>
    </lineage>
</organism>
<evidence type="ECO:0000255" key="1">
    <source>
        <dbReference type="HAMAP-Rule" id="MF_01678"/>
    </source>
</evidence>
<evidence type="ECO:0000305" key="2"/>
<keyword id="KW-0028">Amino-acid biosynthesis</keyword>
<keyword id="KW-0413">Isomerase</keyword>
<keyword id="KW-0486">Methionine biosynthesis</keyword>
<keyword id="KW-1185">Reference proteome</keyword>
<protein>
    <recommendedName>
        <fullName evidence="1">Methylthioribose-1-phosphate isomerase</fullName>
        <shortName evidence="1">M1Pi</shortName>
        <shortName evidence="1">MTR-1-P isomerase</shortName>
        <ecNumber evidence="1">5.3.1.23</ecNumber>
    </recommendedName>
    <alternativeName>
        <fullName evidence="1">S-methyl-5-thioribose-1-phosphate isomerase</fullName>
    </alternativeName>
</protein>
<accession>Q317L9</accession>
<dbReference type="EC" id="5.3.1.23" evidence="1"/>
<dbReference type="EMBL" id="CP000112">
    <property type="protein sequence ID" value="ABB36877.1"/>
    <property type="molecule type" value="Genomic_DNA"/>
</dbReference>
<dbReference type="RefSeq" id="WP_011366261.1">
    <property type="nucleotide sequence ID" value="NC_007519.1"/>
</dbReference>
<dbReference type="SMR" id="Q317L9"/>
<dbReference type="STRING" id="207559.Dde_0076"/>
<dbReference type="KEGG" id="dde:Dde_0076"/>
<dbReference type="eggNOG" id="COG0182">
    <property type="taxonomic scope" value="Bacteria"/>
</dbReference>
<dbReference type="HOGENOM" id="CLU_016218_1_2_7"/>
<dbReference type="UniPathway" id="UPA00904">
    <property type="reaction ID" value="UER00874"/>
</dbReference>
<dbReference type="Proteomes" id="UP000002710">
    <property type="component" value="Chromosome"/>
</dbReference>
<dbReference type="GO" id="GO:0046523">
    <property type="term" value="F:S-methyl-5-thioribose-1-phosphate isomerase activity"/>
    <property type="evidence" value="ECO:0007669"/>
    <property type="project" value="UniProtKB-UniRule"/>
</dbReference>
<dbReference type="GO" id="GO:0019509">
    <property type="term" value="P:L-methionine salvage from methylthioadenosine"/>
    <property type="evidence" value="ECO:0007669"/>
    <property type="project" value="UniProtKB-UniRule"/>
</dbReference>
<dbReference type="FunFam" id="1.20.120.420:FF:000003">
    <property type="entry name" value="Methylthioribose-1-phosphate isomerase"/>
    <property type="match status" value="1"/>
</dbReference>
<dbReference type="FunFam" id="3.40.50.10470:FF:000006">
    <property type="entry name" value="Methylthioribose-1-phosphate isomerase"/>
    <property type="match status" value="1"/>
</dbReference>
<dbReference type="Gene3D" id="1.20.120.420">
    <property type="entry name" value="translation initiation factor eif-2b, domain 1"/>
    <property type="match status" value="1"/>
</dbReference>
<dbReference type="Gene3D" id="3.40.50.10470">
    <property type="entry name" value="Translation initiation factor eif-2b, domain 2"/>
    <property type="match status" value="1"/>
</dbReference>
<dbReference type="HAMAP" id="MF_01678">
    <property type="entry name" value="Salvage_MtnA"/>
    <property type="match status" value="1"/>
</dbReference>
<dbReference type="InterPro" id="IPR000649">
    <property type="entry name" value="IF-2B-related"/>
</dbReference>
<dbReference type="InterPro" id="IPR005251">
    <property type="entry name" value="IF-M1Pi"/>
</dbReference>
<dbReference type="InterPro" id="IPR042529">
    <property type="entry name" value="IF_2B-like_C"/>
</dbReference>
<dbReference type="InterPro" id="IPR011559">
    <property type="entry name" value="Initiation_fac_2B_a/b/d"/>
</dbReference>
<dbReference type="InterPro" id="IPR027363">
    <property type="entry name" value="M1Pi_N"/>
</dbReference>
<dbReference type="InterPro" id="IPR037171">
    <property type="entry name" value="NagB/RpiA_transferase-like"/>
</dbReference>
<dbReference type="NCBIfam" id="TIGR00524">
    <property type="entry name" value="eIF-2B_rel"/>
    <property type="match status" value="1"/>
</dbReference>
<dbReference type="NCBIfam" id="NF004326">
    <property type="entry name" value="PRK05720.1"/>
    <property type="match status" value="1"/>
</dbReference>
<dbReference type="NCBIfam" id="TIGR00512">
    <property type="entry name" value="salvage_mtnA"/>
    <property type="match status" value="1"/>
</dbReference>
<dbReference type="PANTHER" id="PTHR43475">
    <property type="entry name" value="METHYLTHIORIBOSE-1-PHOSPHATE ISOMERASE"/>
    <property type="match status" value="1"/>
</dbReference>
<dbReference type="PANTHER" id="PTHR43475:SF1">
    <property type="entry name" value="METHYLTHIORIBOSE-1-PHOSPHATE ISOMERASE"/>
    <property type="match status" value="1"/>
</dbReference>
<dbReference type="Pfam" id="PF01008">
    <property type="entry name" value="IF-2B"/>
    <property type="match status" value="1"/>
</dbReference>
<dbReference type="SUPFAM" id="SSF100950">
    <property type="entry name" value="NagB/RpiA/CoA transferase-like"/>
    <property type="match status" value="1"/>
</dbReference>
<gene>
    <name evidence="1" type="primary">mtnA</name>
    <name type="ordered locus">Dde_0076</name>
</gene>
<reference key="1">
    <citation type="journal article" date="2011" name="J. Bacteriol.">
        <title>Complete genome sequence and updated annotation of Desulfovibrio alaskensis G20.</title>
        <authorList>
            <person name="Hauser L.J."/>
            <person name="Land M.L."/>
            <person name="Brown S.D."/>
            <person name="Larimer F."/>
            <person name="Keller K.L."/>
            <person name="Rapp-Giles B.J."/>
            <person name="Price M.N."/>
            <person name="Lin M."/>
            <person name="Bruce D.C."/>
            <person name="Detter J.C."/>
            <person name="Tapia R."/>
            <person name="Han C.S."/>
            <person name="Goodwin L.A."/>
            <person name="Cheng J.F."/>
            <person name="Pitluck S."/>
            <person name="Copeland A."/>
            <person name="Lucas S."/>
            <person name="Nolan M."/>
            <person name="Lapidus A.L."/>
            <person name="Palumbo A.V."/>
            <person name="Wall J.D."/>
        </authorList>
    </citation>
    <scope>NUCLEOTIDE SEQUENCE [LARGE SCALE GENOMIC DNA]</scope>
    <source>
        <strain>ATCC BAA-1058 / DSM 17464 / G20</strain>
    </source>
</reference>